<name>G6PD1_MYCBO</name>
<proteinExistence type="inferred from homology"/>
<sequence length="466" mass="52173">MVDGGGGASDLLVIFGITGDLARKMTFRALYRLERHQLLDCPILGVASDDMSVGQLVKWARESIGRTEKIDDAVFDRLAGRLSYLHGDVTDSQLYDSLAELIGSACRPLYYLEMPPALFAPIVENLANVRLLERARVAVEKPFGHDLASALELNARLRAVLGEDQILRVDHFLGKQPVVELEYLRFANQALAELWDRNSISEIHITMAEDFGVEDRGKFYDAVGALRDVVQNHLLQVLALVTMEPPVGSSADDLNDKKAEVFRAMAPLDPDRCVRGQYLGYTEVAGVASDSATETYVALRTEIDNWRWAGVPIFVRAGKELPAKVTEVRLFLRRVPALAFLPNRRPAEPNQIVLRIDPDPGMRLQISAHTDDSWRDIHLDSSFAVDLGEPIRPYERLLYAGLVGDHQLFAREDSIEQTWRIVQPLLDNPGEIHRYDRGSWGPEAAQSLLRGHRGWQSPWLPRGTDA</sequence>
<accession>P0A587</accession>
<accession>A0A1R3XZI2</accession>
<accession>O06573</accession>
<accession>X2BH05</accession>
<evidence type="ECO:0000255" key="1">
    <source>
        <dbReference type="HAMAP-Rule" id="MF_00966"/>
    </source>
</evidence>
<reference key="1">
    <citation type="journal article" date="2003" name="Proc. Natl. Acad. Sci. U.S.A.">
        <title>The complete genome sequence of Mycobacterium bovis.</title>
        <authorList>
            <person name="Garnier T."/>
            <person name="Eiglmeier K."/>
            <person name="Camus J.-C."/>
            <person name="Medina N."/>
            <person name="Mansoor H."/>
            <person name="Pryor M."/>
            <person name="Duthoy S."/>
            <person name="Grondin S."/>
            <person name="Lacroix C."/>
            <person name="Monsempe C."/>
            <person name="Simon S."/>
            <person name="Harris B."/>
            <person name="Atkin R."/>
            <person name="Doggett J."/>
            <person name="Mayes R."/>
            <person name="Keating L."/>
            <person name="Wheeler P.R."/>
            <person name="Parkhill J."/>
            <person name="Barrell B.G."/>
            <person name="Cole S.T."/>
            <person name="Gordon S.V."/>
            <person name="Hewinson R.G."/>
        </authorList>
    </citation>
    <scope>NUCLEOTIDE SEQUENCE [LARGE SCALE GENOMIC DNA]</scope>
    <source>
        <strain>ATCC BAA-935 / AF2122/97</strain>
    </source>
</reference>
<reference key="2">
    <citation type="journal article" date="2017" name="Genome Announc.">
        <title>Updated reference genome sequence and annotation of Mycobacterium bovis AF2122/97.</title>
        <authorList>
            <person name="Malone K.M."/>
            <person name="Farrell D."/>
            <person name="Stuber T.P."/>
            <person name="Schubert O.T."/>
            <person name="Aebersold R."/>
            <person name="Robbe-Austerman S."/>
            <person name="Gordon S.V."/>
        </authorList>
    </citation>
    <scope>NUCLEOTIDE SEQUENCE [LARGE SCALE GENOMIC DNA]</scope>
    <scope>GENOME REANNOTATION</scope>
    <source>
        <strain>ATCC BAA-935 / AF2122/97</strain>
    </source>
</reference>
<dbReference type="EC" id="1.1.1.49" evidence="1"/>
<dbReference type="EMBL" id="LT708304">
    <property type="protein sequence ID" value="SIT99752.1"/>
    <property type="molecule type" value="Genomic_DNA"/>
</dbReference>
<dbReference type="RefSeq" id="NP_854808.1">
    <property type="nucleotide sequence ID" value="NC_002945.3"/>
</dbReference>
<dbReference type="RefSeq" id="WP_003898735.1">
    <property type="nucleotide sequence ID" value="NC_002945.4"/>
</dbReference>
<dbReference type="SMR" id="P0A587"/>
<dbReference type="KEGG" id="mbo:BQ2027_MB1152"/>
<dbReference type="PATRIC" id="fig|233413.5.peg.1260"/>
<dbReference type="UniPathway" id="UPA00115">
    <property type="reaction ID" value="UER00408"/>
</dbReference>
<dbReference type="Proteomes" id="UP000001419">
    <property type="component" value="Chromosome"/>
</dbReference>
<dbReference type="GO" id="GO:0005829">
    <property type="term" value="C:cytosol"/>
    <property type="evidence" value="ECO:0007669"/>
    <property type="project" value="TreeGrafter"/>
</dbReference>
<dbReference type="GO" id="GO:0004345">
    <property type="term" value="F:glucose-6-phosphate dehydrogenase activity"/>
    <property type="evidence" value="ECO:0007669"/>
    <property type="project" value="UniProtKB-UniRule"/>
</dbReference>
<dbReference type="GO" id="GO:0050661">
    <property type="term" value="F:NADP binding"/>
    <property type="evidence" value="ECO:0007669"/>
    <property type="project" value="UniProtKB-UniRule"/>
</dbReference>
<dbReference type="GO" id="GO:0006006">
    <property type="term" value="P:glucose metabolic process"/>
    <property type="evidence" value="ECO:0007669"/>
    <property type="project" value="UniProtKB-KW"/>
</dbReference>
<dbReference type="GO" id="GO:0009051">
    <property type="term" value="P:pentose-phosphate shunt, oxidative branch"/>
    <property type="evidence" value="ECO:0007669"/>
    <property type="project" value="TreeGrafter"/>
</dbReference>
<dbReference type="Gene3D" id="3.30.360.10">
    <property type="entry name" value="Dihydrodipicolinate Reductase, domain 2"/>
    <property type="match status" value="1"/>
</dbReference>
<dbReference type="Gene3D" id="3.40.50.720">
    <property type="entry name" value="NAD(P)-binding Rossmann-like Domain"/>
    <property type="match status" value="1"/>
</dbReference>
<dbReference type="HAMAP" id="MF_00966">
    <property type="entry name" value="G6PD"/>
    <property type="match status" value="1"/>
</dbReference>
<dbReference type="InterPro" id="IPR001282">
    <property type="entry name" value="G6P_DH"/>
</dbReference>
<dbReference type="InterPro" id="IPR019796">
    <property type="entry name" value="G6P_DH_AS"/>
</dbReference>
<dbReference type="InterPro" id="IPR022675">
    <property type="entry name" value="G6P_DH_C"/>
</dbReference>
<dbReference type="InterPro" id="IPR022674">
    <property type="entry name" value="G6P_DH_NAD-bd"/>
</dbReference>
<dbReference type="InterPro" id="IPR036291">
    <property type="entry name" value="NAD(P)-bd_dom_sf"/>
</dbReference>
<dbReference type="NCBIfam" id="NF009492">
    <property type="entry name" value="PRK12853.1-3"/>
    <property type="match status" value="1"/>
</dbReference>
<dbReference type="NCBIfam" id="TIGR00871">
    <property type="entry name" value="zwf"/>
    <property type="match status" value="1"/>
</dbReference>
<dbReference type="PANTHER" id="PTHR23429:SF0">
    <property type="entry name" value="GLUCOSE-6-PHOSPHATE 1-DEHYDROGENASE"/>
    <property type="match status" value="1"/>
</dbReference>
<dbReference type="PANTHER" id="PTHR23429">
    <property type="entry name" value="GLUCOSE-6-PHOSPHATE 1-DEHYDROGENASE G6PD"/>
    <property type="match status" value="1"/>
</dbReference>
<dbReference type="Pfam" id="PF02781">
    <property type="entry name" value="G6PD_C"/>
    <property type="match status" value="1"/>
</dbReference>
<dbReference type="Pfam" id="PF00479">
    <property type="entry name" value="G6PD_N"/>
    <property type="match status" value="1"/>
</dbReference>
<dbReference type="PIRSF" id="PIRSF000110">
    <property type="entry name" value="G6PD"/>
    <property type="match status" value="1"/>
</dbReference>
<dbReference type="PRINTS" id="PR00079">
    <property type="entry name" value="G6PDHDRGNASE"/>
</dbReference>
<dbReference type="SUPFAM" id="SSF55347">
    <property type="entry name" value="Glyceraldehyde-3-phosphate dehydrogenase-like, C-terminal domain"/>
    <property type="match status" value="1"/>
</dbReference>
<dbReference type="SUPFAM" id="SSF51735">
    <property type="entry name" value="NAD(P)-binding Rossmann-fold domains"/>
    <property type="match status" value="1"/>
</dbReference>
<dbReference type="PROSITE" id="PS00069">
    <property type="entry name" value="G6P_DEHYDROGENASE"/>
    <property type="match status" value="1"/>
</dbReference>
<gene>
    <name evidence="1" type="primary">zwf1</name>
    <name type="synonym">zwf</name>
    <name type="ordered locus">BQ2027_MB1152</name>
</gene>
<keyword id="KW-0119">Carbohydrate metabolism</keyword>
<keyword id="KW-0313">Glucose metabolism</keyword>
<keyword id="KW-0521">NADP</keyword>
<keyword id="KW-0560">Oxidoreductase</keyword>
<keyword id="KW-1185">Reference proteome</keyword>
<comment type="function">
    <text evidence="1">Catalyzes the oxidation of glucose 6-phosphate to 6-phosphogluconolactone.</text>
</comment>
<comment type="catalytic activity">
    <reaction evidence="1">
        <text>D-glucose 6-phosphate + NADP(+) = 6-phospho-D-glucono-1,5-lactone + NADPH + H(+)</text>
        <dbReference type="Rhea" id="RHEA:15841"/>
        <dbReference type="ChEBI" id="CHEBI:15378"/>
        <dbReference type="ChEBI" id="CHEBI:57783"/>
        <dbReference type="ChEBI" id="CHEBI:57955"/>
        <dbReference type="ChEBI" id="CHEBI:58349"/>
        <dbReference type="ChEBI" id="CHEBI:61548"/>
        <dbReference type="EC" id="1.1.1.49"/>
    </reaction>
</comment>
<comment type="pathway">
    <text evidence="1">Carbohydrate degradation; pentose phosphate pathway; D-ribulose 5-phosphate from D-glucose 6-phosphate (oxidative stage): step 1/3.</text>
</comment>
<comment type="similarity">
    <text evidence="1">Belongs to the glucose-6-phosphate dehydrogenase family.</text>
</comment>
<feature type="chain" id="PRO_0000068129" description="Glucose-6-phosphate 1-dehydrogenase 1">
    <location>
        <begin position="1"/>
        <end position="466"/>
    </location>
</feature>
<feature type="active site" description="Proton acceptor" evidence="1">
    <location>
        <position position="233"/>
    </location>
</feature>
<feature type="binding site" evidence="1">
    <location>
        <position position="48"/>
    </location>
    <ligand>
        <name>NADP(+)</name>
        <dbReference type="ChEBI" id="CHEBI:58349"/>
    </ligand>
</feature>
<feature type="binding site" evidence="1">
    <location>
        <begin position="88"/>
        <end position="89"/>
    </location>
    <ligand>
        <name>NADP(+)</name>
        <dbReference type="ChEBI" id="CHEBI:58349"/>
    </ligand>
</feature>
<feature type="binding site" evidence="1">
    <location>
        <position position="141"/>
    </location>
    <ligand>
        <name>NADP(+)</name>
        <dbReference type="ChEBI" id="CHEBI:58349"/>
    </ligand>
</feature>
<feature type="binding site" evidence="1">
    <location>
        <position position="171"/>
    </location>
    <ligand>
        <name>substrate</name>
    </ligand>
</feature>
<feature type="binding site" evidence="1">
    <location>
        <position position="175"/>
    </location>
    <ligand>
        <name>substrate</name>
    </ligand>
</feature>
<feature type="binding site" evidence="1">
    <location>
        <position position="209"/>
    </location>
    <ligand>
        <name>substrate</name>
    </ligand>
</feature>
<feature type="binding site" evidence="1">
    <location>
        <position position="228"/>
    </location>
    <ligand>
        <name>substrate</name>
    </ligand>
</feature>
<feature type="binding site" evidence="1">
    <location>
        <position position="319"/>
    </location>
    <ligand>
        <name>substrate</name>
    </ligand>
</feature>
<feature type="binding site" evidence="1">
    <location>
        <position position="324"/>
    </location>
    <ligand>
        <name>substrate</name>
    </ligand>
</feature>
<protein>
    <recommendedName>
        <fullName evidence="1">Glucose-6-phosphate 1-dehydrogenase 1</fullName>
        <shortName evidence="1">G6PD 1</shortName>
        <ecNumber evidence="1">1.1.1.49</ecNumber>
    </recommendedName>
</protein>
<organism>
    <name type="scientific">Mycobacterium bovis (strain ATCC BAA-935 / AF2122/97)</name>
    <dbReference type="NCBI Taxonomy" id="233413"/>
    <lineage>
        <taxon>Bacteria</taxon>
        <taxon>Bacillati</taxon>
        <taxon>Actinomycetota</taxon>
        <taxon>Actinomycetes</taxon>
        <taxon>Mycobacteriales</taxon>
        <taxon>Mycobacteriaceae</taxon>
        <taxon>Mycobacterium</taxon>
        <taxon>Mycobacterium tuberculosis complex</taxon>
    </lineage>
</organism>